<evidence type="ECO:0000255" key="1">
    <source>
        <dbReference type="HAMAP-Rule" id="MF_01030"/>
    </source>
</evidence>
<keyword id="KW-0456">Lyase</keyword>
<keyword id="KW-0663">Pyridoxal phosphate</keyword>
<proteinExistence type="inferred from homology"/>
<dbReference type="EC" id="4.3.1.18" evidence="1"/>
<dbReference type="EMBL" id="CP000886">
    <property type="protein sequence ID" value="ABX70041.1"/>
    <property type="molecule type" value="Genomic_DNA"/>
</dbReference>
<dbReference type="RefSeq" id="WP_000427986.1">
    <property type="nucleotide sequence ID" value="NC_010102.1"/>
</dbReference>
<dbReference type="SMR" id="A9MWI4"/>
<dbReference type="KEGG" id="spq:SPAB_04730"/>
<dbReference type="PATRIC" id="fig|1016998.12.peg.4450"/>
<dbReference type="HOGENOM" id="CLU_035707_0_0_6"/>
<dbReference type="BioCyc" id="SENT1016998:SPAB_RS19210-MONOMER"/>
<dbReference type="Proteomes" id="UP000008556">
    <property type="component" value="Chromosome"/>
</dbReference>
<dbReference type="GO" id="GO:0008721">
    <property type="term" value="F:D-serine ammonia-lyase activity"/>
    <property type="evidence" value="ECO:0007669"/>
    <property type="project" value="UniProtKB-EC"/>
</dbReference>
<dbReference type="GO" id="GO:0016836">
    <property type="term" value="F:hydro-lyase activity"/>
    <property type="evidence" value="ECO:0007669"/>
    <property type="project" value="UniProtKB-UniRule"/>
</dbReference>
<dbReference type="GO" id="GO:0030170">
    <property type="term" value="F:pyridoxal phosphate binding"/>
    <property type="evidence" value="ECO:0007669"/>
    <property type="project" value="InterPro"/>
</dbReference>
<dbReference type="GO" id="GO:0036088">
    <property type="term" value="P:D-serine catabolic process"/>
    <property type="evidence" value="ECO:0007669"/>
    <property type="project" value="TreeGrafter"/>
</dbReference>
<dbReference type="GO" id="GO:0009097">
    <property type="term" value="P:isoleucine biosynthetic process"/>
    <property type="evidence" value="ECO:0007669"/>
    <property type="project" value="TreeGrafter"/>
</dbReference>
<dbReference type="CDD" id="cd06447">
    <property type="entry name" value="D-Ser-dehyd"/>
    <property type="match status" value="1"/>
</dbReference>
<dbReference type="FunFam" id="3.40.50.1100:FF:000018">
    <property type="entry name" value="D-serine dehydratase"/>
    <property type="match status" value="1"/>
</dbReference>
<dbReference type="Gene3D" id="3.40.50.1100">
    <property type="match status" value="2"/>
</dbReference>
<dbReference type="HAMAP" id="MF_01030">
    <property type="entry name" value="D_Ser_dehydrat"/>
    <property type="match status" value="1"/>
</dbReference>
<dbReference type="InterPro" id="IPR011780">
    <property type="entry name" value="D_Ser_am_lyase"/>
</dbReference>
<dbReference type="InterPro" id="IPR050147">
    <property type="entry name" value="Ser/Thr_Dehydratase"/>
</dbReference>
<dbReference type="InterPro" id="IPR000634">
    <property type="entry name" value="Ser/Thr_deHydtase_PyrdxlP-BS"/>
</dbReference>
<dbReference type="InterPro" id="IPR001926">
    <property type="entry name" value="TrpB-like_PALP"/>
</dbReference>
<dbReference type="InterPro" id="IPR036052">
    <property type="entry name" value="TrpB-like_PALP_sf"/>
</dbReference>
<dbReference type="NCBIfam" id="TIGR02035">
    <property type="entry name" value="D_Ser_am_lyase"/>
    <property type="match status" value="1"/>
</dbReference>
<dbReference type="NCBIfam" id="NF002823">
    <property type="entry name" value="PRK02991.1"/>
    <property type="match status" value="1"/>
</dbReference>
<dbReference type="PANTHER" id="PTHR48078:SF9">
    <property type="entry name" value="D-SERINE DEHYDRATASE"/>
    <property type="match status" value="1"/>
</dbReference>
<dbReference type="PANTHER" id="PTHR48078">
    <property type="entry name" value="THREONINE DEHYDRATASE, MITOCHONDRIAL-RELATED"/>
    <property type="match status" value="1"/>
</dbReference>
<dbReference type="Pfam" id="PF00291">
    <property type="entry name" value="PALP"/>
    <property type="match status" value="1"/>
</dbReference>
<dbReference type="SUPFAM" id="SSF53686">
    <property type="entry name" value="Tryptophan synthase beta subunit-like PLP-dependent enzymes"/>
    <property type="match status" value="1"/>
</dbReference>
<dbReference type="PROSITE" id="PS00165">
    <property type="entry name" value="DEHYDRATASE_SER_THR"/>
    <property type="match status" value="1"/>
</dbReference>
<gene>
    <name evidence="1" type="primary">dsdA</name>
    <name type="ordered locus">SPAB_04730</name>
</gene>
<feature type="chain" id="PRO_1000084243" description="D-serine dehydratase">
    <location>
        <begin position="1"/>
        <end position="440"/>
    </location>
</feature>
<feature type="modified residue" description="N6-(pyridoxal phosphate)lysine" evidence="1">
    <location>
        <position position="116"/>
    </location>
</feature>
<name>SDHD_SALPB</name>
<comment type="catalytic activity">
    <reaction evidence="1">
        <text>D-serine = pyruvate + NH4(+)</text>
        <dbReference type="Rhea" id="RHEA:13977"/>
        <dbReference type="ChEBI" id="CHEBI:15361"/>
        <dbReference type="ChEBI" id="CHEBI:28938"/>
        <dbReference type="ChEBI" id="CHEBI:35247"/>
        <dbReference type="EC" id="4.3.1.18"/>
    </reaction>
</comment>
<comment type="cofactor">
    <cofactor evidence="1">
        <name>pyridoxal 5'-phosphate</name>
        <dbReference type="ChEBI" id="CHEBI:597326"/>
    </cofactor>
</comment>
<comment type="subunit">
    <text evidence="1">Monomer.</text>
</comment>
<comment type="similarity">
    <text evidence="1">Belongs to the serine/threonine dehydratase family. DsdA subfamily.</text>
</comment>
<sequence>MENIQKLIARYPLVEDLVALKETTWFNPGATSLAQGLPYVGLTEQDVNAAHDRLARFAPYLAKAFPQTAAAGGMIESDVVAIPAMQKRLEKEYGQTIDGEMLLKKDSHLAISGSIKARGGIYEVLTHAEKLALEAGLLTTDDDYSVLLSPEFKQFFSQYSIAVGSTGNLGLSIGIMSACIGFKVTVHMSADARAWKKAKLRSHGVTVVEYEDDYGVAVEQGRKAAQSDPNCFFIDDENSRTLFLGYAVAGQRLKAQFAQQGRVVDASHPLFVYLPCGVGGGPGGVAFGLKLAFGDNVHCFFAEPTHSPCMLLGVYTGLHDAISVQDIGIDNLTAADGLAVGRASGFVGRAMERLLDGLYTLDDQTMYDMLGWLAQEEGIRLEPSALAGMAGPQRICAAAAYQQRHGFSQTQLGNATHLVWATGGGMVPEDEMEQYLAKGR</sequence>
<reference key="1">
    <citation type="submission" date="2007-11" db="EMBL/GenBank/DDBJ databases">
        <authorList>
            <consortium name="The Salmonella enterica serovar Paratyphi B Genome Sequencing Project"/>
            <person name="McClelland M."/>
            <person name="Sanderson E.K."/>
            <person name="Porwollik S."/>
            <person name="Spieth J."/>
            <person name="Clifton W.S."/>
            <person name="Fulton R."/>
            <person name="Cordes M."/>
            <person name="Wollam A."/>
            <person name="Shah N."/>
            <person name="Pepin K."/>
            <person name="Bhonagiri V."/>
            <person name="Nash W."/>
            <person name="Johnson M."/>
            <person name="Thiruvilangam P."/>
            <person name="Wilson R."/>
        </authorList>
    </citation>
    <scope>NUCLEOTIDE SEQUENCE [LARGE SCALE GENOMIC DNA]</scope>
    <source>
        <strain>ATCC BAA-1250 / SPB7</strain>
    </source>
</reference>
<organism>
    <name type="scientific">Salmonella paratyphi B (strain ATCC BAA-1250 / SPB7)</name>
    <dbReference type="NCBI Taxonomy" id="1016998"/>
    <lineage>
        <taxon>Bacteria</taxon>
        <taxon>Pseudomonadati</taxon>
        <taxon>Pseudomonadota</taxon>
        <taxon>Gammaproteobacteria</taxon>
        <taxon>Enterobacterales</taxon>
        <taxon>Enterobacteriaceae</taxon>
        <taxon>Salmonella</taxon>
    </lineage>
</organism>
<accession>A9MWI4</accession>
<protein>
    <recommendedName>
        <fullName evidence="1">D-serine dehydratase</fullName>
        <ecNumber evidence="1">4.3.1.18</ecNumber>
    </recommendedName>
    <alternativeName>
        <fullName evidence="1">D-serine deaminase</fullName>
        <shortName evidence="1">DSD</shortName>
    </alternativeName>
</protein>